<dbReference type="EC" id="5.2.1.8" evidence="1"/>
<dbReference type="EMBL" id="AE004969">
    <property type="protein sequence ID" value="AAW89322.2"/>
    <property type="molecule type" value="Genomic_DNA"/>
</dbReference>
<dbReference type="RefSeq" id="WP_025456469.1">
    <property type="nucleotide sequence ID" value="NC_002946.2"/>
</dbReference>
<dbReference type="SMR" id="Q5F915"/>
<dbReference type="STRING" id="242231.NGO_0592"/>
<dbReference type="KEGG" id="ngo:NGO_0592"/>
<dbReference type="PATRIC" id="fig|242231.10.peg.701"/>
<dbReference type="HOGENOM" id="CLU_033058_2_0_4"/>
<dbReference type="Proteomes" id="UP000000535">
    <property type="component" value="Chromosome"/>
</dbReference>
<dbReference type="GO" id="GO:0005737">
    <property type="term" value="C:cytoplasm"/>
    <property type="evidence" value="ECO:0007669"/>
    <property type="project" value="UniProtKB-SubCell"/>
</dbReference>
<dbReference type="GO" id="GO:0003755">
    <property type="term" value="F:peptidyl-prolyl cis-trans isomerase activity"/>
    <property type="evidence" value="ECO:0007669"/>
    <property type="project" value="UniProtKB-UniRule"/>
</dbReference>
<dbReference type="GO" id="GO:0044183">
    <property type="term" value="F:protein folding chaperone"/>
    <property type="evidence" value="ECO:0007669"/>
    <property type="project" value="TreeGrafter"/>
</dbReference>
<dbReference type="GO" id="GO:0043022">
    <property type="term" value="F:ribosome binding"/>
    <property type="evidence" value="ECO:0007669"/>
    <property type="project" value="TreeGrafter"/>
</dbReference>
<dbReference type="GO" id="GO:0051083">
    <property type="term" value="P:'de novo' cotranslational protein folding"/>
    <property type="evidence" value="ECO:0007669"/>
    <property type="project" value="TreeGrafter"/>
</dbReference>
<dbReference type="GO" id="GO:0051301">
    <property type="term" value="P:cell division"/>
    <property type="evidence" value="ECO:0007669"/>
    <property type="project" value="UniProtKB-KW"/>
</dbReference>
<dbReference type="GO" id="GO:0061077">
    <property type="term" value="P:chaperone-mediated protein folding"/>
    <property type="evidence" value="ECO:0007669"/>
    <property type="project" value="TreeGrafter"/>
</dbReference>
<dbReference type="GO" id="GO:0015031">
    <property type="term" value="P:protein transport"/>
    <property type="evidence" value="ECO:0007669"/>
    <property type="project" value="UniProtKB-UniRule"/>
</dbReference>
<dbReference type="GO" id="GO:0043335">
    <property type="term" value="P:protein unfolding"/>
    <property type="evidence" value="ECO:0007669"/>
    <property type="project" value="TreeGrafter"/>
</dbReference>
<dbReference type="FunFam" id="3.10.50.40:FF:000001">
    <property type="entry name" value="Trigger factor"/>
    <property type="match status" value="1"/>
</dbReference>
<dbReference type="FunFam" id="3.30.70.1050:FF:000007">
    <property type="entry name" value="Trigger factor"/>
    <property type="match status" value="1"/>
</dbReference>
<dbReference type="Gene3D" id="3.10.50.40">
    <property type="match status" value="1"/>
</dbReference>
<dbReference type="Gene3D" id="3.30.70.1050">
    <property type="entry name" value="Trigger factor ribosome-binding domain"/>
    <property type="match status" value="1"/>
</dbReference>
<dbReference type="Gene3D" id="1.10.3120.10">
    <property type="entry name" value="Trigger factor, C-terminal domain"/>
    <property type="match status" value="1"/>
</dbReference>
<dbReference type="HAMAP" id="MF_00303">
    <property type="entry name" value="Trigger_factor_Tig"/>
    <property type="match status" value="1"/>
</dbReference>
<dbReference type="InterPro" id="IPR046357">
    <property type="entry name" value="PPIase_dom_sf"/>
</dbReference>
<dbReference type="InterPro" id="IPR001179">
    <property type="entry name" value="PPIase_FKBP_dom"/>
</dbReference>
<dbReference type="InterPro" id="IPR005215">
    <property type="entry name" value="Trig_fac"/>
</dbReference>
<dbReference type="InterPro" id="IPR008880">
    <property type="entry name" value="Trigger_fac_C"/>
</dbReference>
<dbReference type="InterPro" id="IPR037041">
    <property type="entry name" value="Trigger_fac_C_sf"/>
</dbReference>
<dbReference type="InterPro" id="IPR008881">
    <property type="entry name" value="Trigger_fac_ribosome-bd_bac"/>
</dbReference>
<dbReference type="InterPro" id="IPR036611">
    <property type="entry name" value="Trigger_fac_ribosome-bd_sf"/>
</dbReference>
<dbReference type="InterPro" id="IPR027304">
    <property type="entry name" value="Trigger_fact/SurA_dom_sf"/>
</dbReference>
<dbReference type="NCBIfam" id="TIGR00115">
    <property type="entry name" value="tig"/>
    <property type="match status" value="1"/>
</dbReference>
<dbReference type="PANTHER" id="PTHR30560">
    <property type="entry name" value="TRIGGER FACTOR CHAPERONE AND PEPTIDYL-PROLYL CIS/TRANS ISOMERASE"/>
    <property type="match status" value="1"/>
</dbReference>
<dbReference type="PANTHER" id="PTHR30560:SF3">
    <property type="entry name" value="TRIGGER FACTOR-LIKE PROTEIN TIG, CHLOROPLASTIC"/>
    <property type="match status" value="1"/>
</dbReference>
<dbReference type="Pfam" id="PF00254">
    <property type="entry name" value="FKBP_C"/>
    <property type="match status" value="1"/>
</dbReference>
<dbReference type="Pfam" id="PF05698">
    <property type="entry name" value="Trigger_C"/>
    <property type="match status" value="1"/>
</dbReference>
<dbReference type="Pfam" id="PF05697">
    <property type="entry name" value="Trigger_N"/>
    <property type="match status" value="1"/>
</dbReference>
<dbReference type="PIRSF" id="PIRSF003095">
    <property type="entry name" value="Trigger_factor"/>
    <property type="match status" value="1"/>
</dbReference>
<dbReference type="SUPFAM" id="SSF54534">
    <property type="entry name" value="FKBP-like"/>
    <property type="match status" value="1"/>
</dbReference>
<dbReference type="SUPFAM" id="SSF109998">
    <property type="entry name" value="Triger factor/SurA peptide-binding domain-like"/>
    <property type="match status" value="1"/>
</dbReference>
<dbReference type="SUPFAM" id="SSF102735">
    <property type="entry name" value="Trigger factor ribosome-binding domain"/>
    <property type="match status" value="1"/>
</dbReference>
<dbReference type="PROSITE" id="PS50059">
    <property type="entry name" value="FKBP_PPIASE"/>
    <property type="match status" value="1"/>
</dbReference>
<reference key="1">
    <citation type="submission" date="2003-03" db="EMBL/GenBank/DDBJ databases">
        <title>The complete genome sequence of Neisseria gonorrhoeae.</title>
        <authorList>
            <person name="Lewis L.A."/>
            <person name="Gillaspy A.F."/>
            <person name="McLaughlin R.E."/>
            <person name="Gipson M."/>
            <person name="Ducey T.F."/>
            <person name="Ownbey T."/>
            <person name="Hartman K."/>
            <person name="Nydick C."/>
            <person name="Carson M.B."/>
            <person name="Vaughn J."/>
            <person name="Thomson C."/>
            <person name="Song L."/>
            <person name="Lin S."/>
            <person name="Yuan X."/>
            <person name="Najar F."/>
            <person name="Zhan M."/>
            <person name="Ren Q."/>
            <person name="Zhu H."/>
            <person name="Qi S."/>
            <person name="Kenton S.M."/>
            <person name="Lai H."/>
            <person name="White J.D."/>
            <person name="Clifton S."/>
            <person name="Roe B.A."/>
            <person name="Dyer D.W."/>
        </authorList>
    </citation>
    <scope>NUCLEOTIDE SEQUENCE [LARGE SCALE GENOMIC DNA]</scope>
    <source>
        <strain>ATCC 700825 / FA 1090</strain>
    </source>
</reference>
<proteinExistence type="inferred from homology"/>
<sequence>MSVTVEILENLERKVVLSLPWSEINAETDKKLKQTQRRAKIDGFRPGKAPLKMIAQMYGASAQNDVINELVQRRFYDVAVAQELKVAGYPRFEGVEEQDDKESFKVAAIFEVFPEVVIGDLSAQEVEKVTASVGDAEVDQTVEILRKQRTRFNHVDREARNGDRVIIDFEGKIDGEPFAGGTSKNYAFVLGAGQMLPEFEAGVVGMKAGESKDVTVNFPEEYHGKDVAGKTAVFTITLNNVSEPTLPEVDADFAKALGIADGDVAKMREEVKKNVSREVERRVNEQTKESVMNALIKAVELKVPVALVNEEAARLANEMKQNFVNQGMTDAANLDLPLDMFKEQAERRVSLGLILAKLVDENKLEPTEGQIKAVVANFAESYEDPQEVIDWYYADTSRLQAPTSLAVESNVVDFVLGKAKVNKKALSFDEVMGAQA</sequence>
<name>TIG_NEIG1</name>
<organism>
    <name type="scientific">Neisseria gonorrhoeae (strain ATCC 700825 / FA 1090)</name>
    <dbReference type="NCBI Taxonomy" id="242231"/>
    <lineage>
        <taxon>Bacteria</taxon>
        <taxon>Pseudomonadati</taxon>
        <taxon>Pseudomonadota</taxon>
        <taxon>Betaproteobacteria</taxon>
        <taxon>Neisseriales</taxon>
        <taxon>Neisseriaceae</taxon>
        <taxon>Neisseria</taxon>
    </lineage>
</organism>
<evidence type="ECO:0000255" key="1">
    <source>
        <dbReference type="HAMAP-Rule" id="MF_00303"/>
    </source>
</evidence>
<protein>
    <recommendedName>
        <fullName evidence="1">Trigger factor</fullName>
        <shortName evidence="1">TF</shortName>
        <ecNumber evidence="1">5.2.1.8</ecNumber>
    </recommendedName>
    <alternativeName>
        <fullName evidence="1">PPIase</fullName>
    </alternativeName>
</protein>
<keyword id="KW-0131">Cell cycle</keyword>
<keyword id="KW-0132">Cell division</keyword>
<keyword id="KW-0143">Chaperone</keyword>
<keyword id="KW-0963">Cytoplasm</keyword>
<keyword id="KW-0413">Isomerase</keyword>
<keyword id="KW-1185">Reference proteome</keyword>
<keyword id="KW-0697">Rotamase</keyword>
<feature type="chain" id="PRO_0000179392" description="Trigger factor">
    <location>
        <begin position="1"/>
        <end position="436"/>
    </location>
</feature>
<feature type="domain" description="PPIase FKBP-type" evidence="1">
    <location>
        <begin position="162"/>
        <end position="247"/>
    </location>
</feature>
<gene>
    <name evidence="1" type="primary">tig</name>
    <name type="ordered locus">NGO_0592</name>
</gene>
<comment type="function">
    <text evidence="1">Involved in protein export. Acts as a chaperone by maintaining the newly synthesized protein in an open conformation. Functions as a peptidyl-prolyl cis-trans isomerase.</text>
</comment>
<comment type="catalytic activity">
    <reaction evidence="1">
        <text>[protein]-peptidylproline (omega=180) = [protein]-peptidylproline (omega=0)</text>
        <dbReference type="Rhea" id="RHEA:16237"/>
        <dbReference type="Rhea" id="RHEA-COMP:10747"/>
        <dbReference type="Rhea" id="RHEA-COMP:10748"/>
        <dbReference type="ChEBI" id="CHEBI:83833"/>
        <dbReference type="ChEBI" id="CHEBI:83834"/>
        <dbReference type="EC" id="5.2.1.8"/>
    </reaction>
</comment>
<comment type="subcellular location">
    <subcellularLocation>
        <location>Cytoplasm</location>
    </subcellularLocation>
    <text evidence="1">About half TF is bound to the ribosome near the polypeptide exit tunnel while the other half is free in the cytoplasm.</text>
</comment>
<comment type="domain">
    <text evidence="1">Consists of 3 domains; the N-terminus binds the ribosome, the middle domain has PPIase activity, while the C-terminus has intrinsic chaperone activity on its own.</text>
</comment>
<comment type="similarity">
    <text evidence="1">Belongs to the FKBP-type PPIase family. Tig subfamily.</text>
</comment>
<accession>Q5F915</accession>